<sequence>MDPTRGLCALSTHDLAKFHSLPPARKAAGKRAHLRCYSKLLSLKSWEQLASFLSLPPGPTFTDFRLFFEVTLGRRIADCVVVALQPYPRCYIVEFKTAMSNTANPQSVTRKAQRLEGTAQLCDCANFLRTSCPPVLGSQGLEVLAALVFKNQRSLRTLQVEFPALGQKTLPTSTTGLLNLLSRWQDGALRARLDRPRPTAQGHRPRTHVGPKPSQLTARVPRSARAGRAGGRKGQVGAVGQVCPGAQK</sequence>
<feature type="chain" id="PRO_0000115990" description="Protein UL24 homolog">
    <location>
        <begin position="1"/>
        <end position="248"/>
    </location>
</feature>
<feature type="region of interest" description="Disordered" evidence="2">
    <location>
        <begin position="194"/>
        <end position="248"/>
    </location>
</feature>
<feature type="compositionally biased region" description="Low complexity" evidence="2">
    <location>
        <begin position="218"/>
        <end position="227"/>
    </location>
</feature>
<comment type="function">
    <text evidence="1">May participate in nuclear egress of viral particles. Plays a role in the dispersal of several host nucleolar proteins including NCL/nucleolin and NPM1. Since deletion of host NCL/nucleolin negatively impact on nuclear egress, UL24 supposedly acts on this process through its effect on host nucleoli.</text>
</comment>
<comment type="subcellular location">
    <subcellularLocation>
        <location evidence="1">Virion</location>
    </subcellularLocation>
    <subcellularLocation>
        <location evidence="1">Host cytoplasm</location>
    </subcellularLocation>
    <subcellularLocation>
        <location evidence="1">Host nucleus</location>
        <location evidence="1">Host nucleolus</location>
    </subcellularLocation>
    <subcellularLocation>
        <location evidence="1">Host Golgi apparatus</location>
    </subcellularLocation>
</comment>
<comment type="induction">
    <text>Expressed late in the infection cycle.</text>
</comment>
<comment type="similarity">
    <text evidence="3">Belongs to the herpesviridae UL24 family.</text>
</comment>
<keyword id="KW-1035">Host cytoplasm</keyword>
<keyword id="KW-1040">Host Golgi apparatus</keyword>
<keyword id="KW-1048">Host nucleus</keyword>
<keyword id="KW-0426">Late protein</keyword>
<keyword id="KW-1185">Reference proteome</keyword>
<keyword id="KW-0946">Virion</keyword>
<reference key="1">
    <citation type="journal article" date="1983" name="Mol. Biol. Med.">
        <title>Sequence analysis of the 17,166 base-pair EcoRI fragment C of B95-8 Epstein-Barr virus.</title>
        <authorList>
            <person name="Bankier A.T."/>
            <person name="Deininger P.L."/>
            <person name="Farrell P.J."/>
            <person name="Barrell B.G."/>
        </authorList>
    </citation>
    <scope>NUCLEOTIDE SEQUENCE [GENOMIC DNA]</scope>
</reference>
<reference key="2">
    <citation type="journal article" date="1984" name="Nature">
        <title>DNA sequence and expression of the B95-8 Epstein-Barr virus genome.</title>
        <authorList>
            <person name="Baer R."/>
            <person name="Bankier A.T."/>
            <person name="Biggin M.D."/>
            <person name="Deininger P.L."/>
            <person name="Farrell P.J."/>
            <person name="Gibson T.J."/>
            <person name="Hatfull G."/>
            <person name="Hudson G.S."/>
            <person name="Satchwell S.C."/>
            <person name="Seguin C."/>
            <person name="Tuffnell P.S."/>
            <person name="Barrell B.G."/>
        </authorList>
    </citation>
    <scope>NUCLEOTIDE SEQUENCE [LARGE SCALE GENOMIC DNA]</scope>
</reference>
<reference key="3">
    <citation type="journal article" date="2003" name="Virology">
        <title>Updated Epstein-Barr virus (EBV) DNA sequence and analysis of a promoter for the BART (CST, BARF0) RNAs of EBV.</title>
        <authorList>
            <person name="de Jesus O."/>
            <person name="Smith P.R."/>
            <person name="Spender L.C."/>
            <person name="Elgueta Karstegl C."/>
            <person name="Niller H.H."/>
            <person name="Huang D."/>
            <person name="Farrell P.J."/>
        </authorList>
    </citation>
    <scope>GENOME REANNOTATION</scope>
</reference>
<protein>
    <recommendedName>
        <fullName>Protein UL24 homolog</fullName>
    </recommendedName>
</protein>
<proteinExistence type="evidence at transcript level"/>
<evidence type="ECO:0000250" key="1">
    <source>
        <dbReference type="UniProtKB" id="P10208"/>
    </source>
</evidence>
<evidence type="ECO:0000256" key="2">
    <source>
        <dbReference type="SAM" id="MobiDB-lite"/>
    </source>
</evidence>
<evidence type="ECO:0000305" key="3"/>
<name>UL24_EBVB9</name>
<accession>P03232</accession>
<accession>Q777B8</accession>
<organismHost>
    <name type="scientific">Homo sapiens</name>
    <name type="common">Human</name>
    <dbReference type="NCBI Taxonomy" id="9606"/>
</organismHost>
<dbReference type="EMBL" id="V01555">
    <property type="protein sequence ID" value="CAA24798.1"/>
    <property type="molecule type" value="Genomic_DNA"/>
</dbReference>
<dbReference type="EMBL" id="AJ507799">
    <property type="protein sequence ID" value="CAD53452.1"/>
    <property type="molecule type" value="Genomic_DNA"/>
</dbReference>
<dbReference type="PIR" id="A03796">
    <property type="entry name" value="QQBE1R"/>
</dbReference>
<dbReference type="RefSeq" id="YP_401702.1">
    <property type="nucleotide sequence ID" value="NC_007605.1"/>
</dbReference>
<dbReference type="IntAct" id="P03232">
    <property type="interactions" value="3"/>
</dbReference>
<dbReference type="MINT" id="P03232"/>
<dbReference type="DNASU" id="3783743"/>
<dbReference type="GeneID" id="3783743"/>
<dbReference type="KEGG" id="vg:3783743"/>
<dbReference type="Proteomes" id="UP000153037">
    <property type="component" value="Segment"/>
</dbReference>
<dbReference type="GO" id="GO:0044177">
    <property type="term" value="C:host cell Golgi apparatus"/>
    <property type="evidence" value="ECO:0007669"/>
    <property type="project" value="UniProtKB-SubCell"/>
</dbReference>
<dbReference type="GO" id="GO:0044196">
    <property type="term" value="C:host cell nucleolus"/>
    <property type="evidence" value="ECO:0007669"/>
    <property type="project" value="UniProtKB-SubCell"/>
</dbReference>
<dbReference type="GO" id="GO:0044423">
    <property type="term" value="C:virion component"/>
    <property type="evidence" value="ECO:0007669"/>
    <property type="project" value="UniProtKB-KW"/>
</dbReference>
<dbReference type="InterPro" id="IPR002580">
    <property type="entry name" value="Herpes_UL24"/>
</dbReference>
<dbReference type="Pfam" id="PF01646">
    <property type="entry name" value="Herpes_UL24"/>
    <property type="match status" value="1"/>
</dbReference>
<gene>
    <name type="ORF">BXRF1</name>
</gene>
<organism>
    <name type="scientific">Epstein-Barr virus (strain B95-8)</name>
    <name type="common">HHV-4</name>
    <name type="synonym">Human herpesvirus 4</name>
    <dbReference type="NCBI Taxonomy" id="10377"/>
    <lineage>
        <taxon>Viruses</taxon>
        <taxon>Duplodnaviria</taxon>
        <taxon>Heunggongvirae</taxon>
        <taxon>Peploviricota</taxon>
        <taxon>Herviviricetes</taxon>
        <taxon>Herpesvirales</taxon>
        <taxon>Orthoherpesviridae</taxon>
        <taxon>Gammaherpesvirinae</taxon>
        <taxon>Lymphocryptovirus</taxon>
        <taxon>Lymphocryptovirus humangamma4</taxon>
        <taxon>Epstein-Barr virus (strain GD1)</taxon>
    </lineage>
</organism>